<organism>
    <name type="scientific">Bovine enteric calicivirus Newbury agent-1 (isolate Bovine/UK/Newbury1/1976)</name>
    <name type="common">BEC</name>
    <dbReference type="NCBI Taxonomy" id="331642"/>
    <lineage>
        <taxon>Viruses</taxon>
        <taxon>Riboviria</taxon>
        <taxon>Orthornavirae</taxon>
        <taxon>Pisuviricota</taxon>
        <taxon>Pisoniviricetes</taxon>
        <taxon>Picornavirales</taxon>
        <taxon>Caliciviridae</taxon>
        <taxon>Nebovirus</taxon>
        <taxon>Newbury 1 virus</taxon>
    </lineage>
</organism>
<name>VP2_BECN1</name>
<sequence length="225" mass="23645">MASAATAGLTLLSGGASIAADIASIVTEQQRLALQKEQIRNNYELGKQSLSLQQQAMENSRDRIRLSAAQIKELGLDPKSELNMLMGLTAGAQPPISTPISSEQLFLNSSNLARSVRWDARNFGEAINTFAGLRAKHQANPNRPDMMLGSDNPNWGARATGDALSVSGLSVRSNHFGSGPSSLGSLSSVRSNPFSSISSGSVGGISLRTVGSRPSIRSVFSTTSV</sequence>
<accession>Q288N6</accession>
<organismHost>
    <name type="scientific">Bos taurus</name>
    <name type="common">Bovine</name>
    <dbReference type="NCBI Taxonomy" id="9913"/>
</organismHost>
<reference key="1">
    <citation type="journal article" date="2006" name="Virology">
        <title>Genomic characterization of the unclassified bovine enteric virus Newbury agent-1 (Newbury1) endorses a new genus in the family Caliciviridae.</title>
        <authorList>
            <person name="Oliver S.L."/>
            <person name="Asobayire E."/>
            <person name="Dastjerdi A.M."/>
            <person name="Bridger J.C."/>
        </authorList>
    </citation>
    <scope>NUCLEOTIDE SEQUENCE [GENOMIC RNA]</scope>
</reference>
<keyword id="KW-1232">Capsid decoration protein</keyword>
<keyword id="KW-0167">Capsid protein</keyword>
<keyword id="KW-1035">Host cytoplasm</keyword>
<keyword id="KW-1185">Reference proteome</keyword>
<keyword id="KW-0946">Virion</keyword>
<feature type="chain" id="PRO_0000402465" description="Minor capsid protein VP2">
    <location>
        <begin position="1"/>
        <end position="225"/>
    </location>
</feature>
<comment type="function">
    <text evidence="1">Minor structural protein that forms a portal-like structure at a unique three-fold axis of symmetry, following binding to the host receptor. The channel formed by VP2 may allow the delivery of the viral genome through the host endosomal membrane.</text>
</comment>
<comment type="subunit">
    <text evidence="1">Homooligomer. The portal-like structure consists in 12 copies of VP2. Interacts with capsid protein VP1.</text>
</comment>
<comment type="subcellular location">
    <subcellularLocation>
        <location evidence="1">Virion</location>
    </subcellularLocation>
    <subcellularLocation>
        <location evidence="2">Host cytoplasm</location>
    </subcellularLocation>
</comment>
<comment type="domain">
    <text evidence="1">The N-terminus domain points away from the virion surface.</text>
</comment>
<comment type="miscellaneous">
    <text evidence="1">Translated by a ribosomal termination-reinitiation process from the bicistronic mRNA coding for VP1 and VP2.</text>
</comment>
<evidence type="ECO:0000250" key="1">
    <source>
        <dbReference type="UniProtKB" id="P28711"/>
    </source>
</evidence>
<evidence type="ECO:0000305" key="2"/>
<dbReference type="EMBL" id="DQ013304">
    <property type="protein sequence ID" value="AAY60850.1"/>
    <property type="molecule type" value="Genomic_RNA"/>
</dbReference>
<dbReference type="RefSeq" id="YP_529551.1">
    <property type="nucleotide sequence ID" value="NC_007916.1"/>
</dbReference>
<dbReference type="SMR" id="Q288N6"/>
<dbReference type="KEGG" id="vg:5130543"/>
<dbReference type="OrthoDB" id="12498at10239"/>
<dbReference type="Proteomes" id="UP000000668">
    <property type="component" value="Genome"/>
</dbReference>
<dbReference type="GO" id="GO:0030430">
    <property type="term" value="C:host cell cytoplasm"/>
    <property type="evidence" value="ECO:0007669"/>
    <property type="project" value="UniProtKB-SubCell"/>
</dbReference>
<dbReference type="GO" id="GO:0098021">
    <property type="term" value="C:viral capsid, decoration"/>
    <property type="evidence" value="ECO:0007669"/>
    <property type="project" value="UniProtKB-KW"/>
</dbReference>
<gene>
    <name type="ORF">ORF2</name>
</gene>
<protein>
    <recommendedName>
        <fullName>Minor capsid protein VP2</fullName>
    </recommendedName>
</protein>
<proteinExistence type="inferred from homology"/>